<sequence length="235" mass="26661">MAEILCTICARGGSKGVKNKNIRKINKLEMIAYSIIQAQNSKLFKHIVISTDSDEIASVAQKYGAEVFFKREAHLANDRTAKLPVMRDALLRSEEHFKTCFETLIDLDASAPLRSSLDIKKAYESFVENDNSNLITAVPARRNPYFNLVEIQNNKVVKSKEGNFTTRQSAPKCYDMNASIYIFKRDYLLENDSVFGKNTGLFVMDESTAFDIDSELDFKIVEFLISLKNLSPKDF</sequence>
<protein>
    <recommendedName>
        <fullName>CMP-N,N'-diacetyllegionaminic acid synthase</fullName>
        <ecNumber>2.7.7.82</ecNumber>
    </recommendedName>
</protein>
<comment type="function">
    <text evidence="1">Involved in biosynthesis of legionaminic acid (5,7-diamino-3,5,7,9-tetradeoxy-D-glycero-D-galacto-non-2-ulosonic acid)(Leg), a sialic acid-like derivative that is incorporated into flagellin via O-linkage to Ser/Thr. Catalyzes the conversion of N,N'-diacetyllegionaminic acid (Leg5Ac7Ac) and CTP into CMP-N,N'-diacetyllegionaminic acid (CMP-Leg5Ac7Ac).</text>
</comment>
<comment type="catalytic activity">
    <reaction evidence="1">
        <text>N,N-diacetyllegionaminate + CTP = CMP-N,N-diacetyllegionaminate + diphosphate</text>
        <dbReference type="Rhea" id="RHEA:34675"/>
        <dbReference type="ChEBI" id="CHEBI:33019"/>
        <dbReference type="ChEBI" id="CHEBI:37563"/>
        <dbReference type="ChEBI" id="CHEBI:68669"/>
        <dbReference type="ChEBI" id="CHEBI:68670"/>
        <dbReference type="EC" id="2.7.7.82"/>
    </reaction>
</comment>
<comment type="similarity">
    <text evidence="2">Belongs to the CMP-NeuNAc synthase family.</text>
</comment>
<gene>
    <name type="primary">legF</name>
    <name type="synonym">ptmB</name>
    <name type="ordered locus">Cj1331</name>
</gene>
<accession>Q0P8S7</accession>
<dbReference type="EC" id="2.7.7.82"/>
<dbReference type="EMBL" id="AL111168">
    <property type="protein sequence ID" value="CAL35444.1"/>
    <property type="molecule type" value="Genomic_DNA"/>
</dbReference>
<dbReference type="PIR" id="H81276">
    <property type="entry name" value="H81276"/>
</dbReference>
<dbReference type="RefSeq" id="WP_002864263.1">
    <property type="nucleotide sequence ID" value="NZ_SZUC01000001.1"/>
</dbReference>
<dbReference type="RefSeq" id="YP_002344720.1">
    <property type="nucleotide sequence ID" value="NC_002163.1"/>
</dbReference>
<dbReference type="SMR" id="Q0P8S7"/>
<dbReference type="IntAct" id="Q0P8S7">
    <property type="interactions" value="7"/>
</dbReference>
<dbReference type="STRING" id="192222.Cj1331"/>
<dbReference type="PaxDb" id="192222-Cj1331"/>
<dbReference type="EnsemblBacteria" id="CAL35444">
    <property type="protein sequence ID" value="CAL35444"/>
    <property type="gene ID" value="Cj1331"/>
</dbReference>
<dbReference type="GeneID" id="905623"/>
<dbReference type="KEGG" id="cje:Cj1331"/>
<dbReference type="PATRIC" id="fig|192222.6.peg.1313"/>
<dbReference type="eggNOG" id="COG1083">
    <property type="taxonomic scope" value="Bacteria"/>
</dbReference>
<dbReference type="HOGENOM" id="CLU_042930_1_0_7"/>
<dbReference type="OrthoDB" id="9805604at2"/>
<dbReference type="BioCyc" id="MetaCyc:MONOMER-16354"/>
<dbReference type="Proteomes" id="UP000000799">
    <property type="component" value="Chromosome"/>
</dbReference>
<dbReference type="GO" id="GO:0008781">
    <property type="term" value="F:N-acylneuraminate cytidylyltransferase activity"/>
    <property type="evidence" value="ECO:0007669"/>
    <property type="project" value="TreeGrafter"/>
</dbReference>
<dbReference type="GO" id="GO:0016779">
    <property type="term" value="F:nucleotidyltransferase activity"/>
    <property type="evidence" value="ECO:0000314"/>
    <property type="project" value="UniProtKB"/>
</dbReference>
<dbReference type="GO" id="GO:0044781">
    <property type="term" value="P:bacterial-type flagellum organization"/>
    <property type="evidence" value="ECO:0007669"/>
    <property type="project" value="UniProtKB-KW"/>
</dbReference>
<dbReference type="GO" id="GO:0009103">
    <property type="term" value="P:lipopolysaccharide biosynthetic process"/>
    <property type="evidence" value="ECO:0000314"/>
    <property type="project" value="UniProtKB"/>
</dbReference>
<dbReference type="CDD" id="cd02513">
    <property type="entry name" value="CMP-NeuAc_Synthase"/>
    <property type="match status" value="1"/>
</dbReference>
<dbReference type="Gene3D" id="3.90.550.10">
    <property type="entry name" value="Spore Coat Polysaccharide Biosynthesis Protein SpsA, Chain A"/>
    <property type="match status" value="1"/>
</dbReference>
<dbReference type="InterPro" id="IPR050793">
    <property type="entry name" value="CMP-NeuNAc_synthase"/>
</dbReference>
<dbReference type="InterPro" id="IPR003329">
    <property type="entry name" value="Cytidylyl_trans"/>
</dbReference>
<dbReference type="InterPro" id="IPR029044">
    <property type="entry name" value="Nucleotide-diphossugar_trans"/>
</dbReference>
<dbReference type="PANTHER" id="PTHR21485">
    <property type="entry name" value="HAD SUPERFAMILY MEMBERS CMAS AND KDSC"/>
    <property type="match status" value="1"/>
</dbReference>
<dbReference type="PANTHER" id="PTHR21485:SF6">
    <property type="entry name" value="N-ACYLNEURAMINATE CYTIDYLYLTRANSFERASE-RELATED"/>
    <property type="match status" value="1"/>
</dbReference>
<dbReference type="Pfam" id="PF02348">
    <property type="entry name" value="CTP_transf_3"/>
    <property type="match status" value="1"/>
</dbReference>
<dbReference type="SUPFAM" id="SSF53448">
    <property type="entry name" value="Nucleotide-diphospho-sugar transferases"/>
    <property type="match status" value="1"/>
</dbReference>
<reference key="1">
    <citation type="journal article" date="2000" name="Nature">
        <title>The genome sequence of the food-borne pathogen Campylobacter jejuni reveals hypervariable sequences.</title>
        <authorList>
            <person name="Parkhill J."/>
            <person name="Wren B.W."/>
            <person name="Mungall K.L."/>
            <person name="Ketley J.M."/>
            <person name="Churcher C.M."/>
            <person name="Basham D."/>
            <person name="Chillingworth T."/>
            <person name="Davies R.M."/>
            <person name="Feltwell T."/>
            <person name="Holroyd S."/>
            <person name="Jagels K."/>
            <person name="Karlyshev A.V."/>
            <person name="Moule S."/>
            <person name="Pallen M.J."/>
            <person name="Penn C.W."/>
            <person name="Quail M.A."/>
            <person name="Rajandream M.A."/>
            <person name="Rutherford K.M."/>
            <person name="van Vliet A.H.M."/>
            <person name="Whitehead S."/>
            <person name="Barrell B.G."/>
        </authorList>
    </citation>
    <scope>NUCLEOTIDE SEQUENCE [LARGE SCALE GENOMIC DNA]</scope>
    <source>
        <strain>ATCC 700819 / NCTC 11168</strain>
    </source>
</reference>
<reference key="2">
    <citation type="journal article" date="2009" name="Glycobiology">
        <title>The CMP-legionaminic acid pathway in Campylobacter: biosynthesis involving novel GDP-linked precursors.</title>
        <authorList>
            <person name="Schoenhofen I.C."/>
            <person name="Vinogradov E."/>
            <person name="Whitfield D.M."/>
            <person name="Brisson J.R."/>
            <person name="Logan S.M."/>
        </authorList>
    </citation>
    <scope>FUNCTION</scope>
    <scope>CATALYTIC ACTIVITY</scope>
    <scope>NOMENCLATURE</scope>
    <source>
        <strain>ATCC 700819 / NCTC 11168</strain>
    </source>
</reference>
<keyword id="KW-1005">Bacterial flagellum biogenesis</keyword>
<keyword id="KW-0548">Nucleotidyltransferase</keyword>
<keyword id="KW-1185">Reference proteome</keyword>
<keyword id="KW-0808">Transferase</keyword>
<organism>
    <name type="scientific">Campylobacter jejuni subsp. jejuni serotype O:2 (strain ATCC 700819 / NCTC 11168)</name>
    <dbReference type="NCBI Taxonomy" id="192222"/>
    <lineage>
        <taxon>Bacteria</taxon>
        <taxon>Pseudomonadati</taxon>
        <taxon>Campylobacterota</taxon>
        <taxon>Epsilonproteobacteria</taxon>
        <taxon>Campylobacterales</taxon>
        <taxon>Campylobacteraceae</taxon>
        <taxon>Campylobacter</taxon>
    </lineage>
</organism>
<name>NEUAH_CAMJE</name>
<proteinExistence type="evidence at protein level"/>
<feature type="chain" id="PRO_0000424187" description="CMP-N,N'-diacetyllegionaminic acid synthase">
    <location>
        <begin position="1"/>
        <end position="235"/>
    </location>
</feature>
<evidence type="ECO:0000269" key="1">
    <source>
    </source>
</evidence>
<evidence type="ECO:0000305" key="2"/>